<sequence>MAKKSMKARDVKRANLAEKFFAKRAELKAIVSDVNVSDEDRWNAVLKLQTLPRDSSPSRQRNRCRQTGRPHGFLRKFGLSRIKVREAAMRGEIPGLRKASW</sequence>
<reference key="1">
    <citation type="journal article" date="2008" name="J. Bacteriol.">
        <title>Complete genome sequence of uropathogenic Proteus mirabilis, a master of both adherence and motility.</title>
        <authorList>
            <person name="Pearson M.M."/>
            <person name="Sebaihia M."/>
            <person name="Churcher C."/>
            <person name="Quail M.A."/>
            <person name="Seshasayee A.S."/>
            <person name="Luscombe N.M."/>
            <person name="Abdellah Z."/>
            <person name="Arrosmith C."/>
            <person name="Atkin B."/>
            <person name="Chillingworth T."/>
            <person name="Hauser H."/>
            <person name="Jagels K."/>
            <person name="Moule S."/>
            <person name="Mungall K."/>
            <person name="Norbertczak H."/>
            <person name="Rabbinowitsch E."/>
            <person name="Walker D."/>
            <person name="Whithead S."/>
            <person name="Thomson N.R."/>
            <person name="Rather P.N."/>
            <person name="Parkhill J."/>
            <person name="Mobley H.L.T."/>
        </authorList>
    </citation>
    <scope>NUCLEOTIDE SEQUENCE [LARGE SCALE GENOMIC DNA]</scope>
    <source>
        <strain>HI4320</strain>
    </source>
</reference>
<accession>B4F1J7</accession>
<comment type="function">
    <text evidence="1">Binds 16S rRNA, required for the assembly of 30S particles and may also be responsible for determining the conformation of the 16S rRNA at the A site.</text>
</comment>
<comment type="subunit">
    <text evidence="1">Part of the 30S ribosomal subunit. Contacts proteins S3 and S10.</text>
</comment>
<comment type="similarity">
    <text evidence="1">Belongs to the universal ribosomal protein uS14 family.</text>
</comment>
<organism>
    <name type="scientific">Proteus mirabilis (strain HI4320)</name>
    <dbReference type="NCBI Taxonomy" id="529507"/>
    <lineage>
        <taxon>Bacteria</taxon>
        <taxon>Pseudomonadati</taxon>
        <taxon>Pseudomonadota</taxon>
        <taxon>Gammaproteobacteria</taxon>
        <taxon>Enterobacterales</taxon>
        <taxon>Morganellaceae</taxon>
        <taxon>Proteus</taxon>
    </lineage>
</organism>
<dbReference type="EMBL" id="AM942759">
    <property type="protein sequence ID" value="CAR46401.1"/>
    <property type="molecule type" value="Genomic_DNA"/>
</dbReference>
<dbReference type="RefSeq" id="WP_004246951.1">
    <property type="nucleotide sequence ID" value="NC_010554.1"/>
</dbReference>
<dbReference type="SMR" id="B4F1J7"/>
<dbReference type="EnsemblBacteria" id="CAR46401">
    <property type="protein sequence ID" value="CAR46401"/>
    <property type="gene ID" value="PMI3268"/>
</dbReference>
<dbReference type="GeneID" id="6800541"/>
<dbReference type="KEGG" id="pmr:PMI3268"/>
<dbReference type="eggNOG" id="COG0199">
    <property type="taxonomic scope" value="Bacteria"/>
</dbReference>
<dbReference type="HOGENOM" id="CLU_139869_0_1_6"/>
<dbReference type="Proteomes" id="UP000008319">
    <property type="component" value="Chromosome"/>
</dbReference>
<dbReference type="GO" id="GO:0005737">
    <property type="term" value="C:cytoplasm"/>
    <property type="evidence" value="ECO:0007669"/>
    <property type="project" value="UniProtKB-ARBA"/>
</dbReference>
<dbReference type="GO" id="GO:0015935">
    <property type="term" value="C:small ribosomal subunit"/>
    <property type="evidence" value="ECO:0007669"/>
    <property type="project" value="TreeGrafter"/>
</dbReference>
<dbReference type="GO" id="GO:0019843">
    <property type="term" value="F:rRNA binding"/>
    <property type="evidence" value="ECO:0007669"/>
    <property type="project" value="UniProtKB-UniRule"/>
</dbReference>
<dbReference type="GO" id="GO:0003735">
    <property type="term" value="F:structural constituent of ribosome"/>
    <property type="evidence" value="ECO:0007669"/>
    <property type="project" value="InterPro"/>
</dbReference>
<dbReference type="GO" id="GO:0006412">
    <property type="term" value="P:translation"/>
    <property type="evidence" value="ECO:0007669"/>
    <property type="project" value="UniProtKB-UniRule"/>
</dbReference>
<dbReference type="FunFam" id="1.10.287.1480:FF:000001">
    <property type="entry name" value="30S ribosomal protein S14"/>
    <property type="match status" value="1"/>
</dbReference>
<dbReference type="Gene3D" id="1.10.287.1480">
    <property type="match status" value="1"/>
</dbReference>
<dbReference type="HAMAP" id="MF_00537">
    <property type="entry name" value="Ribosomal_uS14_1"/>
    <property type="match status" value="1"/>
</dbReference>
<dbReference type="InterPro" id="IPR001209">
    <property type="entry name" value="Ribosomal_uS14"/>
</dbReference>
<dbReference type="InterPro" id="IPR023036">
    <property type="entry name" value="Ribosomal_uS14_bac/plastid"/>
</dbReference>
<dbReference type="InterPro" id="IPR018271">
    <property type="entry name" value="Ribosomal_uS14_CS"/>
</dbReference>
<dbReference type="NCBIfam" id="NF006477">
    <property type="entry name" value="PRK08881.1"/>
    <property type="match status" value="1"/>
</dbReference>
<dbReference type="PANTHER" id="PTHR19836">
    <property type="entry name" value="30S RIBOSOMAL PROTEIN S14"/>
    <property type="match status" value="1"/>
</dbReference>
<dbReference type="PANTHER" id="PTHR19836:SF19">
    <property type="entry name" value="SMALL RIBOSOMAL SUBUNIT PROTEIN US14M"/>
    <property type="match status" value="1"/>
</dbReference>
<dbReference type="Pfam" id="PF00253">
    <property type="entry name" value="Ribosomal_S14"/>
    <property type="match status" value="1"/>
</dbReference>
<dbReference type="SUPFAM" id="SSF57716">
    <property type="entry name" value="Glucocorticoid receptor-like (DNA-binding domain)"/>
    <property type="match status" value="1"/>
</dbReference>
<dbReference type="PROSITE" id="PS00527">
    <property type="entry name" value="RIBOSOMAL_S14"/>
    <property type="match status" value="1"/>
</dbReference>
<name>RS14_PROMH</name>
<evidence type="ECO:0000255" key="1">
    <source>
        <dbReference type="HAMAP-Rule" id="MF_00537"/>
    </source>
</evidence>
<evidence type="ECO:0000305" key="2"/>
<feature type="chain" id="PRO_1000128503" description="Small ribosomal subunit protein uS14">
    <location>
        <begin position="1"/>
        <end position="101"/>
    </location>
</feature>
<keyword id="KW-1185">Reference proteome</keyword>
<keyword id="KW-0687">Ribonucleoprotein</keyword>
<keyword id="KW-0689">Ribosomal protein</keyword>
<keyword id="KW-0694">RNA-binding</keyword>
<keyword id="KW-0699">rRNA-binding</keyword>
<proteinExistence type="inferred from homology"/>
<gene>
    <name evidence="1" type="primary">rpsN</name>
    <name type="ordered locus">PMI3268</name>
</gene>
<protein>
    <recommendedName>
        <fullName evidence="1">Small ribosomal subunit protein uS14</fullName>
    </recommendedName>
    <alternativeName>
        <fullName evidence="2">30S ribosomal protein S14</fullName>
    </alternativeName>
</protein>